<feature type="chain" id="PRO_0000130740" description="Large ribosomal subunit protein uL24">
    <location>
        <begin position="1"/>
        <end position="105"/>
    </location>
</feature>
<proteinExistence type="inferred from homology"/>
<keyword id="KW-1185">Reference proteome</keyword>
<keyword id="KW-0687">Ribonucleoprotein</keyword>
<keyword id="KW-0689">Ribosomal protein</keyword>
<keyword id="KW-0694">RNA-binding</keyword>
<keyword id="KW-0699">rRNA-binding</keyword>
<evidence type="ECO:0000255" key="1">
    <source>
        <dbReference type="HAMAP-Rule" id="MF_01326"/>
    </source>
</evidence>
<evidence type="ECO:0000305" key="2"/>
<dbReference type="EMBL" id="Z21677">
    <property type="protein sequence ID" value="CAA79788.1"/>
    <property type="molecule type" value="Genomic_DNA"/>
</dbReference>
<dbReference type="EMBL" id="AE000512">
    <property type="protein sequence ID" value="AAD36555.1"/>
    <property type="molecule type" value="Genomic_DNA"/>
</dbReference>
<dbReference type="PIR" id="S40199">
    <property type="entry name" value="S40199"/>
</dbReference>
<dbReference type="RefSeq" id="NP_229289.1">
    <property type="nucleotide sequence ID" value="NC_000853.1"/>
</dbReference>
<dbReference type="RefSeq" id="WP_004081814.1">
    <property type="nucleotide sequence ID" value="NC_000853.1"/>
</dbReference>
<dbReference type="SMR" id="P38513"/>
<dbReference type="FunCoup" id="P38513">
    <property type="interactions" value="383"/>
</dbReference>
<dbReference type="STRING" id="243274.TM_1489"/>
<dbReference type="PaxDb" id="243274-THEMA_06855"/>
<dbReference type="EnsemblBacteria" id="AAD36555">
    <property type="protein sequence ID" value="AAD36555"/>
    <property type="gene ID" value="TM_1489"/>
</dbReference>
<dbReference type="KEGG" id="tma:TM1489"/>
<dbReference type="KEGG" id="tmi:THEMA_06855"/>
<dbReference type="KEGG" id="tmm:Tmari_1497"/>
<dbReference type="KEGG" id="tmw:THMA_1521"/>
<dbReference type="eggNOG" id="COG0198">
    <property type="taxonomic scope" value="Bacteria"/>
</dbReference>
<dbReference type="InParanoid" id="P38513"/>
<dbReference type="OrthoDB" id="9807419at2"/>
<dbReference type="Proteomes" id="UP000008183">
    <property type="component" value="Chromosome"/>
</dbReference>
<dbReference type="GO" id="GO:0022625">
    <property type="term" value="C:cytosolic large ribosomal subunit"/>
    <property type="evidence" value="ECO:0000318"/>
    <property type="project" value="GO_Central"/>
</dbReference>
<dbReference type="GO" id="GO:0019843">
    <property type="term" value="F:rRNA binding"/>
    <property type="evidence" value="ECO:0007669"/>
    <property type="project" value="UniProtKB-UniRule"/>
</dbReference>
<dbReference type="GO" id="GO:0003735">
    <property type="term" value="F:structural constituent of ribosome"/>
    <property type="evidence" value="ECO:0007669"/>
    <property type="project" value="InterPro"/>
</dbReference>
<dbReference type="GO" id="GO:0006412">
    <property type="term" value="P:translation"/>
    <property type="evidence" value="ECO:0000318"/>
    <property type="project" value="GO_Central"/>
</dbReference>
<dbReference type="CDD" id="cd06089">
    <property type="entry name" value="KOW_RPL26"/>
    <property type="match status" value="1"/>
</dbReference>
<dbReference type="FunFam" id="2.30.30.30:FF:000004">
    <property type="entry name" value="50S ribosomal protein L24"/>
    <property type="match status" value="1"/>
</dbReference>
<dbReference type="Gene3D" id="2.30.30.30">
    <property type="match status" value="1"/>
</dbReference>
<dbReference type="HAMAP" id="MF_01326_B">
    <property type="entry name" value="Ribosomal_uL24_B"/>
    <property type="match status" value="1"/>
</dbReference>
<dbReference type="InterPro" id="IPR005824">
    <property type="entry name" value="KOW"/>
</dbReference>
<dbReference type="InterPro" id="IPR014722">
    <property type="entry name" value="Rib_uL2_dom2"/>
</dbReference>
<dbReference type="InterPro" id="IPR003256">
    <property type="entry name" value="Ribosomal_uL24"/>
</dbReference>
<dbReference type="InterPro" id="IPR005825">
    <property type="entry name" value="Ribosomal_uL24_CS"/>
</dbReference>
<dbReference type="InterPro" id="IPR041988">
    <property type="entry name" value="Ribosomal_uL24_KOW"/>
</dbReference>
<dbReference type="InterPro" id="IPR008991">
    <property type="entry name" value="Translation_prot_SH3-like_sf"/>
</dbReference>
<dbReference type="NCBIfam" id="TIGR01079">
    <property type="entry name" value="rplX_bact"/>
    <property type="match status" value="1"/>
</dbReference>
<dbReference type="PANTHER" id="PTHR12903">
    <property type="entry name" value="MITOCHONDRIAL RIBOSOMAL PROTEIN L24"/>
    <property type="match status" value="1"/>
</dbReference>
<dbReference type="Pfam" id="PF00467">
    <property type="entry name" value="KOW"/>
    <property type="match status" value="1"/>
</dbReference>
<dbReference type="Pfam" id="PF17136">
    <property type="entry name" value="ribosomal_L24"/>
    <property type="match status" value="1"/>
</dbReference>
<dbReference type="SMART" id="SM00739">
    <property type="entry name" value="KOW"/>
    <property type="match status" value="1"/>
</dbReference>
<dbReference type="SUPFAM" id="SSF50104">
    <property type="entry name" value="Translation proteins SH3-like domain"/>
    <property type="match status" value="1"/>
</dbReference>
<dbReference type="PROSITE" id="PS01108">
    <property type="entry name" value="RIBOSOMAL_L24"/>
    <property type="match status" value="1"/>
</dbReference>
<organism>
    <name type="scientific">Thermotoga maritima (strain ATCC 43589 / DSM 3109 / JCM 10099 / NBRC 100826 / MSB8)</name>
    <dbReference type="NCBI Taxonomy" id="243274"/>
    <lineage>
        <taxon>Bacteria</taxon>
        <taxon>Thermotogati</taxon>
        <taxon>Thermotogota</taxon>
        <taxon>Thermotogae</taxon>
        <taxon>Thermotogales</taxon>
        <taxon>Thermotogaceae</taxon>
        <taxon>Thermotoga</taxon>
    </lineage>
</organism>
<sequence>MRIKKGDLVEVISGKDKGKRGKVLRVIPKENKVIVENVNMVKRHQRPVPQLREGGIIEREAPIYASKVMVVCPACDKRTRVGYRFTEDGKKVRYCKKCGEIIDKD</sequence>
<comment type="function">
    <text evidence="1">One of two assembly initiator proteins, it binds directly to the 5'-end of the 23S rRNA, where it nucleates assembly of the 50S subunit.</text>
</comment>
<comment type="function">
    <text evidence="1">One of the proteins that surrounds the polypeptide exit tunnel on the outside of the subunit.</text>
</comment>
<comment type="subunit">
    <text evidence="1">Part of the 50S ribosomal subunit.</text>
</comment>
<comment type="similarity">
    <text evidence="1">Belongs to the universal ribosomal protein uL24 family.</text>
</comment>
<accession>P38513</accession>
<protein>
    <recommendedName>
        <fullName evidence="1">Large ribosomal subunit protein uL24</fullName>
    </recommendedName>
    <alternativeName>
        <fullName evidence="2">50S ribosomal protein L24</fullName>
    </alternativeName>
</protein>
<name>RL24_THEMA</name>
<gene>
    <name evidence="1" type="primary">rplX</name>
    <name type="ordered locus">TM_1489</name>
</gene>
<reference key="1">
    <citation type="journal article" date="1994" name="J. Bacteriol.">
        <title>Phylogenetic depth of S10 and spc operons: cloning and sequencing of a ribosomal protein gene cluster from the extremely thermophilic bacterium Thermotoga maritima.</title>
        <authorList>
            <person name="Sanangelantoni A.M."/>
            <person name="Bocchetta M."/>
            <person name="Cammarano P."/>
            <person name="Tiboni O."/>
        </authorList>
    </citation>
    <scope>NUCLEOTIDE SEQUENCE [GENOMIC DNA]</scope>
    <source>
        <strain>ATCC 43589 / DSM 3109 / JCM 10099 / NBRC 100826 / MSB8</strain>
    </source>
</reference>
<reference key="2">
    <citation type="journal article" date="1999" name="Nature">
        <title>Evidence for lateral gene transfer between Archaea and Bacteria from genome sequence of Thermotoga maritima.</title>
        <authorList>
            <person name="Nelson K.E."/>
            <person name="Clayton R.A."/>
            <person name="Gill S.R."/>
            <person name="Gwinn M.L."/>
            <person name="Dodson R.J."/>
            <person name="Haft D.H."/>
            <person name="Hickey E.K."/>
            <person name="Peterson J.D."/>
            <person name="Nelson W.C."/>
            <person name="Ketchum K.A."/>
            <person name="McDonald L.A."/>
            <person name="Utterback T.R."/>
            <person name="Malek J.A."/>
            <person name="Linher K.D."/>
            <person name="Garrett M.M."/>
            <person name="Stewart A.M."/>
            <person name="Cotton M.D."/>
            <person name="Pratt M.S."/>
            <person name="Phillips C.A."/>
            <person name="Richardson D.L."/>
            <person name="Heidelberg J.F."/>
            <person name="Sutton G.G."/>
            <person name="Fleischmann R.D."/>
            <person name="Eisen J.A."/>
            <person name="White O."/>
            <person name="Salzberg S.L."/>
            <person name="Smith H.O."/>
            <person name="Venter J.C."/>
            <person name="Fraser C.M."/>
        </authorList>
    </citation>
    <scope>NUCLEOTIDE SEQUENCE [LARGE SCALE GENOMIC DNA]</scope>
    <source>
        <strain>ATCC 43589 / DSM 3109 / JCM 10099 / NBRC 100826 / MSB8</strain>
    </source>
</reference>